<gene>
    <name type="primary">OR52J3</name>
</gene>
<accession>Q8NH60</accession>
<accession>Q6IFE4</accession>
<feature type="chain" id="PRO_0000150780" description="Olfactory receptor 52J3">
    <location>
        <begin position="1"/>
        <end position="311"/>
    </location>
</feature>
<feature type="topological domain" description="Extracellular" evidence="1">
    <location>
        <begin position="1"/>
        <end position="27"/>
    </location>
</feature>
<feature type="transmembrane region" description="Helical; Name=1" evidence="1">
    <location>
        <begin position="28"/>
        <end position="48"/>
    </location>
</feature>
<feature type="topological domain" description="Cytoplasmic" evidence="1">
    <location>
        <begin position="49"/>
        <end position="56"/>
    </location>
</feature>
<feature type="transmembrane region" description="Helical; Name=2" evidence="1">
    <location>
        <begin position="57"/>
        <end position="77"/>
    </location>
</feature>
<feature type="topological domain" description="Extracellular" evidence="1">
    <location>
        <begin position="78"/>
        <end position="101"/>
    </location>
</feature>
<feature type="transmembrane region" description="Helical; Name=3" evidence="1">
    <location>
        <begin position="102"/>
        <end position="122"/>
    </location>
</feature>
<feature type="topological domain" description="Cytoplasmic" evidence="1">
    <location>
        <begin position="123"/>
        <end position="141"/>
    </location>
</feature>
<feature type="transmembrane region" description="Helical; Name=4" evidence="1">
    <location>
        <begin position="142"/>
        <end position="162"/>
    </location>
</feature>
<feature type="topological domain" description="Extracellular" evidence="1">
    <location>
        <begin position="163"/>
        <end position="198"/>
    </location>
</feature>
<feature type="transmembrane region" description="Helical; Name=5" evidence="1">
    <location>
        <begin position="199"/>
        <end position="218"/>
    </location>
</feature>
<feature type="topological domain" description="Cytoplasmic" evidence="1">
    <location>
        <begin position="219"/>
        <end position="238"/>
    </location>
</feature>
<feature type="transmembrane region" description="Helical; Name=6" evidence="1">
    <location>
        <begin position="239"/>
        <end position="259"/>
    </location>
</feature>
<feature type="topological domain" description="Extracellular" evidence="1">
    <location>
        <begin position="260"/>
        <end position="274"/>
    </location>
</feature>
<feature type="transmembrane region" description="Helical; Name=7" evidence="1">
    <location>
        <begin position="275"/>
        <end position="295"/>
    </location>
</feature>
<feature type="topological domain" description="Cytoplasmic" evidence="1">
    <location>
        <begin position="296"/>
        <end position="311"/>
    </location>
</feature>
<feature type="glycosylation site" description="N-linked (GlcNAc...) asparagine" evidence="1">
    <location>
        <position position="5"/>
    </location>
</feature>
<feature type="disulfide bond" evidence="2">
    <location>
        <begin position="99"/>
        <end position="191"/>
    </location>
</feature>
<feature type="sequence variant" id="VAR_034343" description="In dbSNP:rs2500016." evidence="3 4 5">
    <original>T</original>
    <variation>A</variation>
    <location>
        <position position="77"/>
    </location>
</feature>
<feature type="sequence variant" id="VAR_034344" description="In dbSNP:rs2500017." evidence="3 4 5">
    <original>V</original>
    <variation>I</variation>
    <location>
        <position position="128"/>
    </location>
</feature>
<feature type="sequence variant" id="VAR_034345" description="In dbSNP:rs2500018." evidence="3 4 5">
    <original>Q</original>
    <variation>L</variation>
    <location>
        <position position="141"/>
    </location>
</feature>
<feature type="sequence variant" id="VAR_034346" description="In dbSNP:rs17350764.">
    <original>V</original>
    <variation>I</variation>
    <location>
        <position position="226"/>
    </location>
</feature>
<reference key="1">
    <citation type="submission" date="2001-07" db="EMBL/GenBank/DDBJ databases">
        <title>Genome-wide discovery and analysis of human seven transmembrane helix receptor genes.</title>
        <authorList>
            <person name="Suwa M."/>
            <person name="Sato T."/>
            <person name="Okouchi I."/>
            <person name="Arita M."/>
            <person name="Futami K."/>
            <person name="Matsumoto S."/>
            <person name="Tsutsumi S."/>
            <person name="Aburatani H."/>
            <person name="Asai K."/>
            <person name="Akiyama Y."/>
        </authorList>
    </citation>
    <scope>NUCLEOTIDE SEQUENCE [GENOMIC DNA]</scope>
    <scope>VARIANTS ALA-77; ILE-128 AND LEU-141</scope>
</reference>
<reference key="2">
    <citation type="journal article" date="2006" name="Nature">
        <title>Human chromosome 11 DNA sequence and analysis including novel gene identification.</title>
        <authorList>
            <person name="Taylor T.D."/>
            <person name="Noguchi H."/>
            <person name="Totoki Y."/>
            <person name="Toyoda A."/>
            <person name="Kuroki Y."/>
            <person name="Dewar K."/>
            <person name="Lloyd C."/>
            <person name="Itoh T."/>
            <person name="Takeda T."/>
            <person name="Kim D.-W."/>
            <person name="She X."/>
            <person name="Barlow K.F."/>
            <person name="Bloom T."/>
            <person name="Bruford E."/>
            <person name="Chang J.L."/>
            <person name="Cuomo C.A."/>
            <person name="Eichler E."/>
            <person name="FitzGerald M.G."/>
            <person name="Jaffe D.B."/>
            <person name="LaButti K."/>
            <person name="Nicol R."/>
            <person name="Park H.-S."/>
            <person name="Seaman C."/>
            <person name="Sougnez C."/>
            <person name="Yang X."/>
            <person name="Zimmer A.R."/>
            <person name="Zody M.C."/>
            <person name="Birren B.W."/>
            <person name="Nusbaum C."/>
            <person name="Fujiyama A."/>
            <person name="Hattori M."/>
            <person name="Rogers J."/>
            <person name="Lander E.S."/>
            <person name="Sakaki Y."/>
        </authorList>
    </citation>
    <scope>NUCLEOTIDE SEQUENCE [LARGE SCALE GENOMIC DNA]</scope>
</reference>
<reference key="3">
    <citation type="submission" date="2005-09" db="EMBL/GenBank/DDBJ databases">
        <authorList>
            <person name="Mural R.J."/>
            <person name="Istrail S."/>
            <person name="Sutton G.G."/>
            <person name="Florea L."/>
            <person name="Halpern A.L."/>
            <person name="Mobarry C.M."/>
            <person name="Lippert R."/>
            <person name="Walenz B."/>
            <person name="Shatkay H."/>
            <person name="Dew I."/>
            <person name="Miller J.R."/>
            <person name="Flanigan M.J."/>
            <person name="Edwards N.J."/>
            <person name="Bolanos R."/>
            <person name="Fasulo D."/>
            <person name="Halldorsson B.V."/>
            <person name="Hannenhalli S."/>
            <person name="Turner R."/>
            <person name="Yooseph S."/>
            <person name="Lu F."/>
            <person name="Nusskern D.R."/>
            <person name="Shue B.C."/>
            <person name="Zheng X.H."/>
            <person name="Zhong F."/>
            <person name="Delcher A.L."/>
            <person name="Huson D.H."/>
            <person name="Kravitz S.A."/>
            <person name="Mouchard L."/>
            <person name="Reinert K."/>
            <person name="Remington K.A."/>
            <person name="Clark A.G."/>
            <person name="Waterman M.S."/>
            <person name="Eichler E.E."/>
            <person name="Adams M.D."/>
            <person name="Hunkapiller M.W."/>
            <person name="Myers E.W."/>
            <person name="Venter J.C."/>
        </authorList>
    </citation>
    <scope>NUCLEOTIDE SEQUENCE [LARGE SCALE GENOMIC DNA]</scope>
    <scope>VARIANTS ALA-77; ILE-128 AND LEU-141</scope>
</reference>
<reference key="4">
    <citation type="journal article" date="2004" name="Proc. Natl. Acad. Sci. U.S.A.">
        <title>The human olfactory receptor gene family.</title>
        <authorList>
            <person name="Malnic B."/>
            <person name="Godfrey P.A."/>
            <person name="Buck L.B."/>
        </authorList>
    </citation>
    <scope>IDENTIFICATION</scope>
    <scope>VARIANTS ALA-77; ILE-128 AND LEU-141</scope>
</reference>
<reference key="5">
    <citation type="journal article" date="2004" name="Proc. Natl. Acad. Sci. U.S.A.">
        <authorList>
            <person name="Malnic B."/>
            <person name="Godfrey P.A."/>
            <person name="Buck L.B."/>
        </authorList>
    </citation>
    <scope>ERRATUM OF PUBMED:14983052</scope>
</reference>
<organism>
    <name type="scientific">Homo sapiens</name>
    <name type="common">Human</name>
    <dbReference type="NCBI Taxonomy" id="9606"/>
    <lineage>
        <taxon>Eukaryota</taxon>
        <taxon>Metazoa</taxon>
        <taxon>Chordata</taxon>
        <taxon>Craniata</taxon>
        <taxon>Vertebrata</taxon>
        <taxon>Euteleostomi</taxon>
        <taxon>Mammalia</taxon>
        <taxon>Eutheria</taxon>
        <taxon>Euarchontoglires</taxon>
        <taxon>Primates</taxon>
        <taxon>Haplorrhini</taxon>
        <taxon>Catarrhini</taxon>
        <taxon>Hominidae</taxon>
        <taxon>Homo</taxon>
    </lineage>
</organism>
<comment type="function">
    <text evidence="6">Odorant receptor.</text>
</comment>
<comment type="subcellular location">
    <subcellularLocation>
        <location>Cell membrane</location>
        <topology>Multi-pass membrane protein</topology>
    </subcellularLocation>
</comment>
<comment type="similarity">
    <text evidence="2">Belongs to the G-protein coupled receptor 1 family.</text>
</comment>
<comment type="online information" name="Human Olfactory Receptor Data Exploratorium (HORDE)">
    <link uri="http://genome.weizmann.ac.il/horde/card/index/symbol:OR52J3"/>
</comment>
<proteinExistence type="inferred from homology"/>
<evidence type="ECO:0000255" key="1"/>
<evidence type="ECO:0000255" key="2">
    <source>
        <dbReference type="PROSITE-ProRule" id="PRU00521"/>
    </source>
</evidence>
<evidence type="ECO:0000269" key="3">
    <source>
    </source>
</evidence>
<evidence type="ECO:0000269" key="4">
    <source ref="1"/>
</evidence>
<evidence type="ECO:0000269" key="5">
    <source ref="3"/>
</evidence>
<evidence type="ECO:0000305" key="6"/>
<keyword id="KW-1003">Cell membrane</keyword>
<keyword id="KW-1015">Disulfide bond</keyword>
<keyword id="KW-0297">G-protein coupled receptor</keyword>
<keyword id="KW-0325">Glycoprotein</keyword>
<keyword id="KW-0472">Membrane</keyword>
<keyword id="KW-0552">Olfaction</keyword>
<keyword id="KW-0675">Receptor</keyword>
<keyword id="KW-1185">Reference proteome</keyword>
<keyword id="KW-0716">Sensory transduction</keyword>
<keyword id="KW-0807">Transducer</keyword>
<keyword id="KW-0812">Transmembrane</keyword>
<keyword id="KW-1133">Transmembrane helix</keyword>
<sequence length="311" mass="35091">MFYHNKSIFHPVTFFLIGIPGLEDFHMWISGPFCSVYLVALLGNATILLVIKVEQTLREPMFYFLAILSTIDLALSTTSVPRMLGIFWFDAHEINYGACVAQMFLIHAFTGMEAEVLLAMAFDRYVAVCAPLHYATILTSQVLVGISMCIVIRPVLLTLPMVYLIYRLPFCQAHIIAHSYCEHMGIAKLSCGNIRINGIYGLFVVSFFVLNLVLIGISYVYILRAVFRLPSHDAQLKALSTCGAHVGVICVFYIPSVFSFLTHRFGHQIPGYIHILVANLYLIIPPSLNPIIYGVRTKQIRERVLYVFTKK</sequence>
<dbReference type="EMBL" id="AB065530">
    <property type="protein sequence ID" value="BAC05777.1"/>
    <property type="molecule type" value="Genomic_DNA"/>
</dbReference>
<dbReference type="EMBL" id="AC113331">
    <property type="status" value="NOT_ANNOTATED_CDS"/>
    <property type="molecule type" value="Genomic_DNA"/>
</dbReference>
<dbReference type="EMBL" id="CH471064">
    <property type="protein sequence ID" value="EAW68813.1"/>
    <property type="molecule type" value="Genomic_DNA"/>
</dbReference>
<dbReference type="EMBL" id="BK004318">
    <property type="protein sequence ID" value="DAA04716.1"/>
    <property type="molecule type" value="Genomic_DNA"/>
</dbReference>
<dbReference type="CCDS" id="CCDS31370.1"/>
<dbReference type="RefSeq" id="NP_001001916.2">
    <property type="nucleotide sequence ID" value="NM_001001916.2"/>
</dbReference>
<dbReference type="SMR" id="Q8NH60"/>
<dbReference type="FunCoup" id="Q8NH60">
    <property type="interactions" value="468"/>
</dbReference>
<dbReference type="STRING" id="9606.ENSP00000369728"/>
<dbReference type="GlyCosmos" id="Q8NH60">
    <property type="glycosylation" value="1 site, No reported glycans"/>
</dbReference>
<dbReference type="GlyGen" id="Q8NH60">
    <property type="glycosylation" value="1 site"/>
</dbReference>
<dbReference type="iPTMnet" id="Q8NH60"/>
<dbReference type="PhosphoSitePlus" id="Q8NH60"/>
<dbReference type="BioMuta" id="OR52J3"/>
<dbReference type="DMDM" id="296439249"/>
<dbReference type="PaxDb" id="9606-ENSP00000369728"/>
<dbReference type="Antibodypedia" id="66777">
    <property type="antibodies" value="59 antibodies from 14 providers"/>
</dbReference>
<dbReference type="DNASU" id="119679"/>
<dbReference type="Ensembl" id="ENST00000380370.1">
    <property type="protein sequence ID" value="ENSP00000369728.1"/>
    <property type="gene ID" value="ENSG00000205495.1"/>
</dbReference>
<dbReference type="Ensembl" id="ENST00000709176.1">
    <property type="protein sequence ID" value="ENSP00000517537.1"/>
    <property type="gene ID" value="ENSG00000291908.1"/>
</dbReference>
<dbReference type="GeneID" id="119679"/>
<dbReference type="KEGG" id="hsa:119679"/>
<dbReference type="MANE-Select" id="ENST00000380370.1">
    <property type="protein sequence ID" value="ENSP00000369728.1"/>
    <property type="RefSeq nucleotide sequence ID" value="NM_001001916.2"/>
    <property type="RefSeq protein sequence ID" value="NP_001001916.2"/>
</dbReference>
<dbReference type="UCSC" id="uc010qyv.2">
    <property type="organism name" value="human"/>
</dbReference>
<dbReference type="AGR" id="HGNC:14799"/>
<dbReference type="CTD" id="119679"/>
<dbReference type="GeneCards" id="OR52J3"/>
<dbReference type="HGNC" id="HGNC:14799">
    <property type="gene designation" value="OR52J3"/>
</dbReference>
<dbReference type="HPA" id="ENSG00000205495">
    <property type="expression patterns" value="Not detected"/>
</dbReference>
<dbReference type="neXtProt" id="NX_Q8NH60"/>
<dbReference type="OpenTargets" id="ENSG00000205495"/>
<dbReference type="PharmGKB" id="PA32416"/>
<dbReference type="VEuPathDB" id="HostDB:ENSG00000205495"/>
<dbReference type="eggNOG" id="ENOG502RNPB">
    <property type="taxonomic scope" value="Eukaryota"/>
</dbReference>
<dbReference type="GeneTree" id="ENSGT01090000260056"/>
<dbReference type="HOGENOM" id="CLU_012526_0_0_1"/>
<dbReference type="InParanoid" id="Q8NH60"/>
<dbReference type="OMA" id="HQIPGYI"/>
<dbReference type="OrthoDB" id="5969463at2759"/>
<dbReference type="PAN-GO" id="Q8NH60">
    <property type="GO annotations" value="0 GO annotations based on evolutionary models"/>
</dbReference>
<dbReference type="PhylomeDB" id="Q8NH60"/>
<dbReference type="TreeFam" id="TF343679"/>
<dbReference type="PathwayCommons" id="Q8NH60"/>
<dbReference type="Reactome" id="R-HSA-9752946">
    <property type="pathway name" value="Expression and translocation of olfactory receptors"/>
</dbReference>
<dbReference type="SignaLink" id="Q8NH60"/>
<dbReference type="BioGRID-ORCS" id="119679">
    <property type="hits" value="9 hits in 739 CRISPR screens"/>
</dbReference>
<dbReference type="GeneWiki" id="OR52J3"/>
<dbReference type="GenomeRNAi" id="119679"/>
<dbReference type="Pharos" id="Q8NH60">
    <property type="development level" value="Tdark"/>
</dbReference>
<dbReference type="PRO" id="PR:Q8NH60"/>
<dbReference type="Proteomes" id="UP000005640">
    <property type="component" value="Chromosome 11"/>
</dbReference>
<dbReference type="RNAct" id="Q8NH60">
    <property type="molecule type" value="protein"/>
</dbReference>
<dbReference type="GO" id="GO:0005886">
    <property type="term" value="C:plasma membrane"/>
    <property type="evidence" value="ECO:0000318"/>
    <property type="project" value="GO_Central"/>
</dbReference>
<dbReference type="GO" id="GO:0004930">
    <property type="term" value="F:G protein-coupled receptor activity"/>
    <property type="evidence" value="ECO:0007669"/>
    <property type="project" value="UniProtKB-KW"/>
</dbReference>
<dbReference type="GO" id="GO:0004984">
    <property type="term" value="F:olfactory receptor activity"/>
    <property type="evidence" value="ECO:0000318"/>
    <property type="project" value="GO_Central"/>
</dbReference>
<dbReference type="CDD" id="cd15952">
    <property type="entry name" value="7tmA_OR52E-like"/>
    <property type="match status" value="1"/>
</dbReference>
<dbReference type="FunFam" id="1.20.1070.10:FF:000006">
    <property type="entry name" value="Olfactory receptor"/>
    <property type="match status" value="1"/>
</dbReference>
<dbReference type="Gene3D" id="1.20.1070.10">
    <property type="entry name" value="Rhodopsin 7-helix transmembrane proteins"/>
    <property type="match status" value="1"/>
</dbReference>
<dbReference type="InterPro" id="IPR000276">
    <property type="entry name" value="GPCR_Rhodpsn"/>
</dbReference>
<dbReference type="InterPro" id="IPR017452">
    <property type="entry name" value="GPCR_Rhodpsn_7TM"/>
</dbReference>
<dbReference type="InterPro" id="IPR000725">
    <property type="entry name" value="Olfact_rcpt"/>
</dbReference>
<dbReference type="InterPro" id="IPR050402">
    <property type="entry name" value="OR51/52/56-like"/>
</dbReference>
<dbReference type="PANTHER" id="PTHR26450:SF355">
    <property type="entry name" value="OLFACTORY RECEPTOR 52J3"/>
    <property type="match status" value="1"/>
</dbReference>
<dbReference type="PANTHER" id="PTHR26450">
    <property type="entry name" value="OLFACTORY RECEPTOR 56B1-RELATED"/>
    <property type="match status" value="1"/>
</dbReference>
<dbReference type="Pfam" id="PF13853">
    <property type="entry name" value="7tm_4"/>
    <property type="match status" value="1"/>
</dbReference>
<dbReference type="PRINTS" id="PR00237">
    <property type="entry name" value="GPCRRHODOPSN"/>
</dbReference>
<dbReference type="PRINTS" id="PR00245">
    <property type="entry name" value="OLFACTORYR"/>
</dbReference>
<dbReference type="SUPFAM" id="SSF81321">
    <property type="entry name" value="Family A G protein-coupled receptor-like"/>
    <property type="match status" value="1"/>
</dbReference>
<dbReference type="PROSITE" id="PS00237">
    <property type="entry name" value="G_PROTEIN_RECEP_F1_1"/>
    <property type="match status" value="1"/>
</dbReference>
<dbReference type="PROSITE" id="PS50262">
    <property type="entry name" value="G_PROTEIN_RECEP_F1_2"/>
    <property type="match status" value="1"/>
</dbReference>
<name>O52J3_HUMAN</name>
<protein>
    <recommendedName>
        <fullName>Olfactory receptor 52J3</fullName>
    </recommendedName>
    <alternativeName>
        <fullName>Olfactory receptor OR11-32</fullName>
    </alternativeName>
</protein>